<evidence type="ECO:0000255" key="1">
    <source>
        <dbReference type="HAMAP-Rule" id="MF_00109"/>
    </source>
</evidence>
<sequence length="182" mass="20328">MIKAPNIILVGPMGAGKTTIGRLISQSMGKEFYDLDKVIEDNAGADIPWIFEREGEDGFRKRETQALASIVESDTGDCVLATGGGIVMREENRDILRENALVVYLYASVAQQLYRTSKSTHRPLLQTGDPRATLKKLFEIRDPLYRDVATLVIETDSRHPRSVANKVLDAIKRHLKMEITVS</sequence>
<gene>
    <name evidence="1" type="primary">aroK</name>
    <name type="ordered locus">Mmwyl1_4117</name>
</gene>
<reference key="1">
    <citation type="submission" date="2007-06" db="EMBL/GenBank/DDBJ databases">
        <title>Complete sequence of Marinomonas sp. MWYL1.</title>
        <authorList>
            <consortium name="US DOE Joint Genome Institute"/>
            <person name="Copeland A."/>
            <person name="Lucas S."/>
            <person name="Lapidus A."/>
            <person name="Barry K."/>
            <person name="Glavina del Rio T."/>
            <person name="Dalin E."/>
            <person name="Tice H."/>
            <person name="Pitluck S."/>
            <person name="Kiss H."/>
            <person name="Brettin T."/>
            <person name="Bruce D."/>
            <person name="Detter J.C."/>
            <person name="Han C."/>
            <person name="Schmutz J."/>
            <person name="Larimer F."/>
            <person name="Land M."/>
            <person name="Hauser L."/>
            <person name="Kyrpides N."/>
            <person name="Kim E."/>
            <person name="Johnston A.W.B."/>
            <person name="Todd J.D."/>
            <person name="Rogers R."/>
            <person name="Wexler M."/>
            <person name="Bond P.L."/>
            <person name="Li Y."/>
            <person name="Richardson P."/>
        </authorList>
    </citation>
    <scope>NUCLEOTIDE SEQUENCE [LARGE SCALE GENOMIC DNA]</scope>
    <source>
        <strain>MWYL1</strain>
    </source>
</reference>
<proteinExistence type="inferred from homology"/>
<accession>A6W2T4</accession>
<organism>
    <name type="scientific">Marinomonas sp. (strain MWYL1)</name>
    <dbReference type="NCBI Taxonomy" id="400668"/>
    <lineage>
        <taxon>Bacteria</taxon>
        <taxon>Pseudomonadati</taxon>
        <taxon>Pseudomonadota</taxon>
        <taxon>Gammaproteobacteria</taxon>
        <taxon>Oceanospirillales</taxon>
        <taxon>Oceanospirillaceae</taxon>
        <taxon>Marinomonas</taxon>
    </lineage>
</organism>
<name>AROK_MARMS</name>
<feature type="chain" id="PRO_1000119060" description="Shikimate kinase">
    <location>
        <begin position="1"/>
        <end position="182"/>
    </location>
</feature>
<feature type="binding site" evidence="1">
    <location>
        <begin position="14"/>
        <end position="19"/>
    </location>
    <ligand>
        <name>ATP</name>
        <dbReference type="ChEBI" id="CHEBI:30616"/>
    </ligand>
</feature>
<feature type="binding site" evidence="1">
    <location>
        <position position="18"/>
    </location>
    <ligand>
        <name>Mg(2+)</name>
        <dbReference type="ChEBI" id="CHEBI:18420"/>
    </ligand>
</feature>
<feature type="binding site" evidence="1">
    <location>
        <position position="36"/>
    </location>
    <ligand>
        <name>substrate</name>
    </ligand>
</feature>
<feature type="binding site" evidence="1">
    <location>
        <position position="60"/>
    </location>
    <ligand>
        <name>substrate</name>
    </ligand>
</feature>
<feature type="binding site" evidence="1">
    <location>
        <position position="84"/>
    </location>
    <ligand>
        <name>substrate</name>
    </ligand>
</feature>
<feature type="binding site" evidence="1">
    <location>
        <position position="122"/>
    </location>
    <ligand>
        <name>ATP</name>
        <dbReference type="ChEBI" id="CHEBI:30616"/>
    </ligand>
</feature>
<feature type="binding site" evidence="1">
    <location>
        <position position="141"/>
    </location>
    <ligand>
        <name>substrate</name>
    </ligand>
</feature>
<keyword id="KW-0028">Amino-acid biosynthesis</keyword>
<keyword id="KW-0057">Aromatic amino acid biosynthesis</keyword>
<keyword id="KW-0067">ATP-binding</keyword>
<keyword id="KW-0963">Cytoplasm</keyword>
<keyword id="KW-0418">Kinase</keyword>
<keyword id="KW-0460">Magnesium</keyword>
<keyword id="KW-0479">Metal-binding</keyword>
<keyword id="KW-0547">Nucleotide-binding</keyword>
<keyword id="KW-0808">Transferase</keyword>
<comment type="function">
    <text evidence="1">Catalyzes the specific phosphorylation of the 3-hydroxyl group of shikimic acid using ATP as a cosubstrate.</text>
</comment>
<comment type="catalytic activity">
    <reaction evidence="1">
        <text>shikimate + ATP = 3-phosphoshikimate + ADP + H(+)</text>
        <dbReference type="Rhea" id="RHEA:13121"/>
        <dbReference type="ChEBI" id="CHEBI:15378"/>
        <dbReference type="ChEBI" id="CHEBI:30616"/>
        <dbReference type="ChEBI" id="CHEBI:36208"/>
        <dbReference type="ChEBI" id="CHEBI:145989"/>
        <dbReference type="ChEBI" id="CHEBI:456216"/>
        <dbReference type="EC" id="2.7.1.71"/>
    </reaction>
</comment>
<comment type="cofactor">
    <cofactor evidence="1">
        <name>Mg(2+)</name>
        <dbReference type="ChEBI" id="CHEBI:18420"/>
    </cofactor>
    <text evidence="1">Binds 1 Mg(2+) ion per subunit.</text>
</comment>
<comment type="pathway">
    <text evidence="1">Metabolic intermediate biosynthesis; chorismate biosynthesis; chorismate from D-erythrose 4-phosphate and phosphoenolpyruvate: step 5/7.</text>
</comment>
<comment type="subunit">
    <text evidence="1">Monomer.</text>
</comment>
<comment type="subcellular location">
    <subcellularLocation>
        <location evidence="1">Cytoplasm</location>
    </subcellularLocation>
</comment>
<comment type="similarity">
    <text evidence="1">Belongs to the shikimate kinase family.</text>
</comment>
<dbReference type="EC" id="2.7.1.71" evidence="1"/>
<dbReference type="EMBL" id="CP000749">
    <property type="protein sequence ID" value="ABR73013.1"/>
    <property type="molecule type" value="Genomic_DNA"/>
</dbReference>
<dbReference type="SMR" id="A6W2T4"/>
<dbReference type="STRING" id="400668.Mmwyl1_4117"/>
<dbReference type="KEGG" id="mmw:Mmwyl1_4117"/>
<dbReference type="eggNOG" id="COG0703">
    <property type="taxonomic scope" value="Bacteria"/>
</dbReference>
<dbReference type="HOGENOM" id="CLU_057607_2_2_6"/>
<dbReference type="OrthoDB" id="9800332at2"/>
<dbReference type="UniPathway" id="UPA00053">
    <property type="reaction ID" value="UER00088"/>
</dbReference>
<dbReference type="GO" id="GO:0005829">
    <property type="term" value="C:cytosol"/>
    <property type="evidence" value="ECO:0007669"/>
    <property type="project" value="TreeGrafter"/>
</dbReference>
<dbReference type="GO" id="GO:0005524">
    <property type="term" value="F:ATP binding"/>
    <property type="evidence" value="ECO:0007669"/>
    <property type="project" value="UniProtKB-UniRule"/>
</dbReference>
<dbReference type="GO" id="GO:0000287">
    <property type="term" value="F:magnesium ion binding"/>
    <property type="evidence" value="ECO:0007669"/>
    <property type="project" value="UniProtKB-UniRule"/>
</dbReference>
<dbReference type="GO" id="GO:0004765">
    <property type="term" value="F:shikimate kinase activity"/>
    <property type="evidence" value="ECO:0007669"/>
    <property type="project" value="UniProtKB-UniRule"/>
</dbReference>
<dbReference type="GO" id="GO:0008652">
    <property type="term" value="P:amino acid biosynthetic process"/>
    <property type="evidence" value="ECO:0007669"/>
    <property type="project" value="UniProtKB-KW"/>
</dbReference>
<dbReference type="GO" id="GO:0009073">
    <property type="term" value="P:aromatic amino acid family biosynthetic process"/>
    <property type="evidence" value="ECO:0007669"/>
    <property type="project" value="UniProtKB-KW"/>
</dbReference>
<dbReference type="GO" id="GO:0009423">
    <property type="term" value="P:chorismate biosynthetic process"/>
    <property type="evidence" value="ECO:0007669"/>
    <property type="project" value="UniProtKB-UniRule"/>
</dbReference>
<dbReference type="CDD" id="cd00464">
    <property type="entry name" value="SK"/>
    <property type="match status" value="1"/>
</dbReference>
<dbReference type="Gene3D" id="3.40.50.300">
    <property type="entry name" value="P-loop containing nucleotide triphosphate hydrolases"/>
    <property type="match status" value="1"/>
</dbReference>
<dbReference type="HAMAP" id="MF_00109">
    <property type="entry name" value="Shikimate_kinase"/>
    <property type="match status" value="1"/>
</dbReference>
<dbReference type="InterPro" id="IPR027417">
    <property type="entry name" value="P-loop_NTPase"/>
</dbReference>
<dbReference type="InterPro" id="IPR031322">
    <property type="entry name" value="Shikimate/glucono_kinase"/>
</dbReference>
<dbReference type="InterPro" id="IPR000623">
    <property type="entry name" value="Shikimate_kinase/TSH1"/>
</dbReference>
<dbReference type="InterPro" id="IPR023000">
    <property type="entry name" value="Shikimate_kinase_CS"/>
</dbReference>
<dbReference type="PANTHER" id="PTHR21087">
    <property type="entry name" value="SHIKIMATE KINASE"/>
    <property type="match status" value="1"/>
</dbReference>
<dbReference type="PANTHER" id="PTHR21087:SF16">
    <property type="entry name" value="SHIKIMATE KINASE 1, CHLOROPLASTIC"/>
    <property type="match status" value="1"/>
</dbReference>
<dbReference type="Pfam" id="PF01202">
    <property type="entry name" value="SKI"/>
    <property type="match status" value="1"/>
</dbReference>
<dbReference type="PRINTS" id="PR01100">
    <property type="entry name" value="SHIKIMTKNASE"/>
</dbReference>
<dbReference type="SUPFAM" id="SSF52540">
    <property type="entry name" value="P-loop containing nucleoside triphosphate hydrolases"/>
    <property type="match status" value="1"/>
</dbReference>
<dbReference type="PROSITE" id="PS01128">
    <property type="entry name" value="SHIKIMATE_KINASE"/>
    <property type="match status" value="1"/>
</dbReference>
<protein>
    <recommendedName>
        <fullName evidence="1">Shikimate kinase</fullName>
        <shortName evidence="1">SK</shortName>
        <ecNumber evidence="1">2.7.1.71</ecNumber>
    </recommendedName>
</protein>